<comment type="function">
    <text evidence="2">Catalyzes the transformation of cystathionine to homocysteine.</text>
</comment>
<comment type="catalytic activity">
    <reaction evidence="2">
        <text>L,L-cystathionine + H2O = L-homocysteine + pyruvate + NH4(+)</text>
        <dbReference type="Rhea" id="RHEA:13965"/>
        <dbReference type="ChEBI" id="CHEBI:15361"/>
        <dbReference type="ChEBI" id="CHEBI:15377"/>
        <dbReference type="ChEBI" id="CHEBI:28938"/>
        <dbReference type="ChEBI" id="CHEBI:58161"/>
        <dbReference type="ChEBI" id="CHEBI:58199"/>
    </reaction>
</comment>
<comment type="catalytic activity">
    <reaction>
        <text>an S-substituted L-cysteine + H2O = a thiol + pyruvate + NH4(+)</text>
        <dbReference type="Rhea" id="RHEA:18121"/>
        <dbReference type="ChEBI" id="CHEBI:15361"/>
        <dbReference type="ChEBI" id="CHEBI:15377"/>
        <dbReference type="ChEBI" id="CHEBI:28938"/>
        <dbReference type="ChEBI" id="CHEBI:29256"/>
        <dbReference type="ChEBI" id="CHEBI:58717"/>
        <dbReference type="EC" id="4.4.1.13"/>
    </reaction>
</comment>
<comment type="cofactor">
    <cofactor evidence="1">
        <name>pyridoxal 5'-phosphate</name>
        <dbReference type="ChEBI" id="CHEBI:597326"/>
    </cofactor>
</comment>
<comment type="pathway">
    <text evidence="2">Amino-acid biosynthesis; L-methionine biosynthesis via de novo pathway; L-homocysteine from L-cystathionine: step 1/1.</text>
</comment>
<comment type="disruption phenotype">
    <text evidence="2">Cells lacking this gene show methionine prototrophy, suggesting that additional methionine biosynthetic pathway can be present in C.glutamicum. The mutant strains also completely lose their ability to show resistance to the S-(beta-aminoethyl)-cysteine, which is a toxic lysine analog.</text>
</comment>
<comment type="similarity">
    <text evidence="3">Belongs to the class-II pyridoxal-phosphate-dependent aminotransferase family. MalY/PatB cystathionine beta-lyase subfamily.</text>
</comment>
<evidence type="ECO:0000250" key="1"/>
<evidence type="ECO:0000269" key="2">
    <source>
    </source>
</evidence>
<evidence type="ECO:0000305" key="3"/>
<name>CBL_CORGT</name>
<proteinExistence type="evidence at protein level"/>
<reference key="1">
    <citation type="journal article" date="2001" name="Mol. Cells">
        <title>Properties of the Corynebacterium glutamicum metC gene encoding cystathionine beta-lyase.</title>
        <authorList>
            <person name="Kim J.W."/>
            <person name="Kim H.J."/>
            <person name="Kim Y."/>
            <person name="Lee M.S."/>
            <person name="Lee H.S."/>
        </authorList>
    </citation>
    <scope>NUCLEOTIDE SEQUENCE [GENOMIC DNA]</scope>
    <scope>FUNCTION</scope>
    <scope>CATALYTIC ACTIVITY</scope>
    <scope>PATHWAY</scope>
    <scope>DISRUPTION PHENOTYPE</scope>
    <source>
        <strain>ATCC 13059 / ASO19</strain>
    </source>
</reference>
<feature type="chain" id="PRO_0000425957" description="Cystathionine beta-lyase">
    <location>
        <begin position="1"/>
        <end position="368"/>
    </location>
</feature>
<feature type="modified residue" description="N6-(pyridoxal phosphate)lysine" evidence="1">
    <location>
        <position position="221"/>
    </location>
</feature>
<accession>Q93QC6</accession>
<accession>Q6M3D6</accession>
<keyword id="KW-0028">Amino-acid biosynthesis</keyword>
<keyword id="KW-0456">Lyase</keyword>
<keyword id="KW-0486">Methionine biosynthesis</keyword>
<keyword id="KW-0663">Pyridoxal phosphate</keyword>
<dbReference type="EC" id="4.4.1.13"/>
<dbReference type="EMBL" id="AF276227">
    <property type="protein sequence ID" value="AAK69425.1"/>
    <property type="molecule type" value="Genomic_DNA"/>
</dbReference>
<dbReference type="RefSeq" id="WP_011015029.1">
    <property type="nucleotide sequence ID" value="NZ_JOLA01000052.1"/>
</dbReference>
<dbReference type="SMR" id="Q93QC6"/>
<dbReference type="DNASU" id="1020260"/>
<dbReference type="UniPathway" id="UPA00051">
    <property type="reaction ID" value="UER00078"/>
</dbReference>
<dbReference type="GO" id="GO:0047804">
    <property type="term" value="F:cysteine-S-conjugate beta-lyase activity"/>
    <property type="evidence" value="ECO:0007669"/>
    <property type="project" value="UniProtKB-EC"/>
</dbReference>
<dbReference type="GO" id="GO:0030170">
    <property type="term" value="F:pyridoxal phosphate binding"/>
    <property type="evidence" value="ECO:0007669"/>
    <property type="project" value="InterPro"/>
</dbReference>
<dbReference type="GO" id="GO:0009086">
    <property type="term" value="P:methionine biosynthetic process"/>
    <property type="evidence" value="ECO:0007669"/>
    <property type="project" value="UniProtKB-KW"/>
</dbReference>
<dbReference type="CDD" id="cd00609">
    <property type="entry name" value="AAT_like"/>
    <property type="match status" value="1"/>
</dbReference>
<dbReference type="Gene3D" id="3.90.1150.10">
    <property type="entry name" value="Aspartate Aminotransferase, domain 1"/>
    <property type="match status" value="1"/>
</dbReference>
<dbReference type="Gene3D" id="3.40.640.10">
    <property type="entry name" value="Type I PLP-dependent aspartate aminotransferase-like (Major domain)"/>
    <property type="match status" value="1"/>
</dbReference>
<dbReference type="InterPro" id="IPR004839">
    <property type="entry name" value="Aminotransferase_I/II_large"/>
</dbReference>
<dbReference type="InterPro" id="IPR051798">
    <property type="entry name" value="Class-II_PLP-Dep_Aminotrans"/>
</dbReference>
<dbReference type="InterPro" id="IPR015424">
    <property type="entry name" value="PyrdxlP-dep_Trfase"/>
</dbReference>
<dbReference type="InterPro" id="IPR015421">
    <property type="entry name" value="PyrdxlP-dep_Trfase_major"/>
</dbReference>
<dbReference type="InterPro" id="IPR015422">
    <property type="entry name" value="PyrdxlP-dep_Trfase_small"/>
</dbReference>
<dbReference type="PANTHER" id="PTHR43525:SF2">
    <property type="entry name" value="CYSTATHIONINE BETA-LYASE-RELATED"/>
    <property type="match status" value="1"/>
</dbReference>
<dbReference type="PANTHER" id="PTHR43525">
    <property type="entry name" value="PROTEIN MALY"/>
    <property type="match status" value="1"/>
</dbReference>
<dbReference type="Pfam" id="PF00155">
    <property type="entry name" value="Aminotran_1_2"/>
    <property type="match status" value="1"/>
</dbReference>
<dbReference type="SUPFAM" id="SSF53383">
    <property type="entry name" value="PLP-dependent transferases"/>
    <property type="match status" value="1"/>
</dbReference>
<sequence length="368" mass="40730">MRFPELEELKNRRTLKWTRFPEDVLPLWVAESDFGTCPQLKEAMADAVEREVFGYPPDATGLNDALTGFYERRYGFGPNPESVFAIPDVVRGLKLAIEHFTKPGSAIIVPLPAYPPFIELPKVTGRQAIYIDAHEYDLKEIEKAFADGAGSLLFCNPHNPLGTVFSEEYIRELTDIAAKYDARIIVDEIHAPLVYEGTHVVAAGVSENAANTCITITATSKAWNTAGLKCAQIFFSNEADVKAWKNLSDITRDGVSILGLIAAETVYNEGEEFLDESIQILKDNRDFAAAELEKLGVKVYAPDSTYLMWLDFAGTKIEEAPSKILREEGKVMLNDGAAFGGFTTCARLNFACSRETLEEGLRRIASVL</sequence>
<organism>
    <name type="scientific">Corynebacterium glutamicum</name>
    <name type="common">Brevibacterium saccharolyticum</name>
    <dbReference type="NCBI Taxonomy" id="1718"/>
    <lineage>
        <taxon>Bacteria</taxon>
        <taxon>Bacillati</taxon>
        <taxon>Actinomycetota</taxon>
        <taxon>Actinomycetes</taxon>
        <taxon>Mycobacteriales</taxon>
        <taxon>Corynebacteriaceae</taxon>
        <taxon>Corynebacterium</taxon>
    </lineage>
</organism>
<protein>
    <recommendedName>
        <fullName>Cystathionine beta-lyase</fullName>
        <shortName>CBL</shortName>
        <ecNumber>4.4.1.13</ecNumber>
    </recommendedName>
    <alternativeName>
        <fullName>Beta-cystathionase</fullName>
    </alternativeName>
    <alternativeName>
        <fullName>Cysteine lyase</fullName>
    </alternativeName>
    <alternativeName>
        <fullName>Cysteine-S-conjugate beta-lyase</fullName>
    </alternativeName>
</protein>
<gene>
    <name type="primary">metC</name>
</gene>